<organism>
    <name type="scientific">Listeria monocytogenes serotype 4b (strain F2365)</name>
    <dbReference type="NCBI Taxonomy" id="265669"/>
    <lineage>
        <taxon>Bacteria</taxon>
        <taxon>Bacillati</taxon>
        <taxon>Bacillota</taxon>
        <taxon>Bacilli</taxon>
        <taxon>Bacillales</taxon>
        <taxon>Listeriaceae</taxon>
        <taxon>Listeria</taxon>
    </lineage>
</organism>
<comment type="similarity">
    <text evidence="2">Belongs to the MacroD-type family.</text>
</comment>
<proteinExistence type="inferred from homology"/>
<accession>Q71W03</accession>
<feature type="chain" id="PRO_0000089199" description="Macro domain-containing protein LMOf2365_2748">
    <location>
        <begin position="1"/>
        <end position="176"/>
    </location>
</feature>
<feature type="domain" description="Macro" evidence="1">
    <location>
        <begin position="1"/>
        <end position="175"/>
    </location>
</feature>
<name>Y2748_LISMF</name>
<sequence length="176" mass="18982">MEITVVKGDITEQDVDVIVNAANPGLLGGGGVDGAIHQAAGPDLLKECQEVINRIGTCPAGEAVITSAGDLQASYIIHAVGPIWKDGEHQEANKLASCYWKALDLAAGKELTSIAFPNISTGVYGFPKKLAAEVALYTVRKWAEEEYDTSIEEIRFVCFDEENLKLYNKLINSEVV</sequence>
<protein>
    <recommendedName>
        <fullName>Macro domain-containing protein LMOf2365_2748</fullName>
    </recommendedName>
</protein>
<gene>
    <name type="ordered locus">LMOf2365_2748</name>
</gene>
<reference key="1">
    <citation type="journal article" date="2004" name="Nucleic Acids Res.">
        <title>Whole genome comparisons of serotype 4b and 1/2a strains of the food-borne pathogen Listeria monocytogenes reveal new insights into the core genome components of this species.</title>
        <authorList>
            <person name="Nelson K.E."/>
            <person name="Fouts D.E."/>
            <person name="Mongodin E.F."/>
            <person name="Ravel J."/>
            <person name="DeBoy R.T."/>
            <person name="Kolonay J.F."/>
            <person name="Rasko D.A."/>
            <person name="Angiuoli S.V."/>
            <person name="Gill S.R."/>
            <person name="Paulsen I.T."/>
            <person name="Peterson J.D."/>
            <person name="White O."/>
            <person name="Nelson W.C."/>
            <person name="Nierman W.C."/>
            <person name="Beanan M.J."/>
            <person name="Brinkac L.M."/>
            <person name="Daugherty S.C."/>
            <person name="Dodson R.J."/>
            <person name="Durkin A.S."/>
            <person name="Madupu R."/>
            <person name="Haft D.H."/>
            <person name="Selengut J."/>
            <person name="Van Aken S.E."/>
            <person name="Khouri H.M."/>
            <person name="Fedorova N."/>
            <person name="Forberger H.A."/>
            <person name="Tran B."/>
            <person name="Kathariou S."/>
            <person name="Wonderling L.D."/>
            <person name="Uhlich G.A."/>
            <person name="Bayles D.O."/>
            <person name="Luchansky J.B."/>
            <person name="Fraser C.M."/>
        </authorList>
    </citation>
    <scope>NUCLEOTIDE SEQUENCE [LARGE SCALE GENOMIC DNA]</scope>
    <source>
        <strain>F2365</strain>
    </source>
</reference>
<evidence type="ECO:0000255" key="1">
    <source>
        <dbReference type="PROSITE-ProRule" id="PRU00490"/>
    </source>
</evidence>
<evidence type="ECO:0000305" key="2"/>
<dbReference type="EMBL" id="AE017262">
    <property type="protein sequence ID" value="AAT05513.1"/>
    <property type="molecule type" value="Genomic_DNA"/>
</dbReference>
<dbReference type="RefSeq" id="WP_003725312.1">
    <property type="nucleotide sequence ID" value="NC_002973.6"/>
</dbReference>
<dbReference type="SMR" id="Q71W03"/>
<dbReference type="KEGG" id="lmf:LMOf2365_2748"/>
<dbReference type="HOGENOM" id="CLU_046550_5_1_9"/>
<dbReference type="CDD" id="cd02908">
    <property type="entry name" value="Macro_OAADPr_deacetylase"/>
    <property type="match status" value="1"/>
</dbReference>
<dbReference type="Gene3D" id="3.40.220.10">
    <property type="entry name" value="Leucine Aminopeptidase, subunit E, domain 1"/>
    <property type="match status" value="1"/>
</dbReference>
<dbReference type="InterPro" id="IPR002589">
    <property type="entry name" value="Macro_dom"/>
</dbReference>
<dbReference type="InterPro" id="IPR043472">
    <property type="entry name" value="Macro_dom-like"/>
</dbReference>
<dbReference type="NCBIfam" id="NF001663">
    <property type="entry name" value="PRK00431.1-4"/>
    <property type="match status" value="1"/>
</dbReference>
<dbReference type="NCBIfam" id="NF001664">
    <property type="entry name" value="PRK00431.1-6"/>
    <property type="match status" value="1"/>
</dbReference>
<dbReference type="PANTHER" id="PTHR11106">
    <property type="entry name" value="GANGLIOSIDE INDUCED DIFFERENTIATION ASSOCIATED PROTEIN 2-RELATED"/>
    <property type="match status" value="1"/>
</dbReference>
<dbReference type="PANTHER" id="PTHR11106:SF27">
    <property type="entry name" value="MACRO DOMAIN-CONTAINING PROTEIN"/>
    <property type="match status" value="1"/>
</dbReference>
<dbReference type="Pfam" id="PF01661">
    <property type="entry name" value="Macro"/>
    <property type="match status" value="1"/>
</dbReference>
<dbReference type="SMART" id="SM00506">
    <property type="entry name" value="A1pp"/>
    <property type="match status" value="1"/>
</dbReference>
<dbReference type="SUPFAM" id="SSF52949">
    <property type="entry name" value="Macro domain-like"/>
    <property type="match status" value="1"/>
</dbReference>
<dbReference type="PROSITE" id="PS51154">
    <property type="entry name" value="MACRO"/>
    <property type="match status" value="1"/>
</dbReference>